<comment type="function">
    <text evidence="1">Involved in both the arginine and lysine biosynthetic pathways. Phosphorylates the LysW-bound precursors glutamate (for arginine biosynthesis), respectively alpha-aminoadipate (for lysine biosynthesis).</text>
</comment>
<comment type="catalytic activity">
    <reaction evidence="1">
        <text>[amino-group carrier protein]-C-terminal-N-(1,4-dicarboxybutan-1-yl)-L-glutamine + ATP = [amino-group carrier protein]-C-terminal-N-(1-carboxy-5-phosphooxy-5-oxopentan-1-yl)-L-glutamine + ADP</text>
        <dbReference type="Rhea" id="RHEA:41944"/>
        <dbReference type="Rhea" id="RHEA-COMP:9694"/>
        <dbReference type="Rhea" id="RHEA-COMP:9712"/>
        <dbReference type="ChEBI" id="CHEBI:30616"/>
        <dbReference type="ChEBI" id="CHEBI:78499"/>
        <dbReference type="ChEBI" id="CHEBI:78503"/>
        <dbReference type="ChEBI" id="CHEBI:456216"/>
        <dbReference type="EC" id="2.7.2.17"/>
    </reaction>
</comment>
<comment type="catalytic activity">
    <reaction evidence="1">
        <text>[amino-group carrier protein]-C-terminal-gamma-(L-glutamyl)-L-glutamate + ATP = [amino-group carrier protein]-C-terminal-gamma-(5-phospho-L-glutamyl)-L-glutamate + ADP</text>
        <dbReference type="Rhea" id="RHEA:52632"/>
        <dbReference type="Rhea" id="RHEA-COMP:13311"/>
        <dbReference type="Rhea" id="RHEA-COMP:13313"/>
        <dbReference type="ChEBI" id="CHEBI:30616"/>
        <dbReference type="ChEBI" id="CHEBI:136714"/>
        <dbReference type="ChEBI" id="CHEBI:136717"/>
        <dbReference type="ChEBI" id="CHEBI:456216"/>
        <dbReference type="EC" id="2.7.2.19"/>
    </reaction>
</comment>
<comment type="pathway">
    <text evidence="1">Amino-acid biosynthesis; L-lysine biosynthesis via AAA pathway; L-lysine from L-alpha-aminoadipate (Thermus route): step 2/5.</text>
</comment>
<comment type="pathway">
    <text evidence="1">Amino-acid biosynthesis; L-arginine biosynthesis.</text>
</comment>
<comment type="subcellular location">
    <subcellularLocation>
        <location evidence="1">Cytoplasm</location>
    </subcellularLocation>
</comment>
<comment type="similarity">
    <text evidence="1">Belongs to the acetylglutamate kinase family. LysZ subfamily.</text>
</comment>
<sequence length="249" mass="27847">MRWVSMRVIKVGGSVLENLEKVFKPEIFRDAVVVHGGSRYVDELAKKLGLNVEKLTSPSGVTFRRTTRKVLDVYIAAVMKANRELVSFLRRQGIEAIGVSGVKEVIIGRRKKLIKAVINGKIMAIRDDYSGIIKEVNVEMIRNYMKVGVPVIAPIAYDPVENVPLNVDGDKVAYHVALALKSRELYFLSDTAFLINGEVIDKIPRNRIEEYFPYSSGGMRKKLLMAKKAIESGVERVIIEGLNGRTVIS</sequence>
<reference key="1">
    <citation type="journal article" date="1998" name="DNA Res.">
        <title>Complete sequence and gene organization of the genome of a hyper-thermophilic archaebacterium, Pyrococcus horikoshii OT3.</title>
        <authorList>
            <person name="Kawarabayasi Y."/>
            <person name="Sawada M."/>
            <person name="Horikawa H."/>
            <person name="Haikawa Y."/>
            <person name="Hino Y."/>
            <person name="Yamamoto S."/>
            <person name="Sekine M."/>
            <person name="Baba S."/>
            <person name="Kosugi H."/>
            <person name="Hosoyama A."/>
            <person name="Nagai Y."/>
            <person name="Sakai M."/>
            <person name="Ogura K."/>
            <person name="Otsuka R."/>
            <person name="Nakazawa H."/>
            <person name="Takamiya M."/>
            <person name="Ohfuku Y."/>
            <person name="Funahashi T."/>
            <person name="Tanaka T."/>
            <person name="Kudoh Y."/>
            <person name="Yamazaki J."/>
            <person name="Kushida N."/>
            <person name="Oguchi A."/>
            <person name="Aoki K."/>
            <person name="Yoshizawa T."/>
            <person name="Nakamura Y."/>
            <person name="Robb F.T."/>
            <person name="Horikoshi K."/>
            <person name="Masuchi Y."/>
            <person name="Shizuya H."/>
            <person name="Kikuchi H."/>
        </authorList>
    </citation>
    <scope>NUCLEOTIDE SEQUENCE [LARGE SCALE GENOMIC DNA]</scope>
    <source>
        <strain>ATCC 700860 / DSM 12428 / JCM 9974 / NBRC 100139 / OT-3</strain>
    </source>
</reference>
<gene>
    <name evidence="1" type="primary">lysZ</name>
    <name type="ordered locus">PH1718</name>
</gene>
<accession>O59398</accession>
<organism>
    <name type="scientific">Pyrococcus horikoshii (strain ATCC 700860 / DSM 12428 / JCM 9974 / NBRC 100139 / OT-3)</name>
    <dbReference type="NCBI Taxonomy" id="70601"/>
    <lineage>
        <taxon>Archaea</taxon>
        <taxon>Methanobacteriati</taxon>
        <taxon>Methanobacteriota</taxon>
        <taxon>Thermococci</taxon>
        <taxon>Thermococcales</taxon>
        <taxon>Thermococcaceae</taxon>
        <taxon>Pyrococcus</taxon>
    </lineage>
</organism>
<name>LYSZ_PYRHO</name>
<keyword id="KW-0028">Amino-acid biosynthesis</keyword>
<keyword id="KW-0055">Arginine biosynthesis</keyword>
<keyword id="KW-0067">ATP-binding</keyword>
<keyword id="KW-0963">Cytoplasm</keyword>
<keyword id="KW-0418">Kinase</keyword>
<keyword id="KW-0457">Lysine biosynthesis</keyword>
<keyword id="KW-0547">Nucleotide-binding</keyword>
<keyword id="KW-0808">Transferase</keyword>
<protein>
    <recommendedName>
        <fullName evidence="1">Putative [LysW]-aminoadipate/[LysW]-glutamate kinase</fullName>
        <ecNumber evidence="1">2.7.2.17</ecNumber>
        <ecNumber evidence="1">2.7.2.19</ecNumber>
    </recommendedName>
</protein>
<feature type="chain" id="PRO_0000112702" description="Putative [LysW]-aminoadipate/[LysW]-glutamate kinase">
    <location>
        <begin position="1"/>
        <end position="249"/>
    </location>
</feature>
<feature type="binding site" evidence="1">
    <location>
        <position position="64"/>
    </location>
    <ligand>
        <name>substrate</name>
    </ligand>
</feature>
<feature type="binding site" evidence="1">
    <location>
        <position position="166"/>
    </location>
    <ligand>
        <name>substrate</name>
    </ligand>
</feature>
<feature type="site" description="Transition state stabilizer" evidence="1">
    <location>
        <position position="10"/>
    </location>
</feature>
<feature type="site" description="Transition state stabilizer" evidence="1">
    <location>
        <position position="222"/>
    </location>
</feature>
<evidence type="ECO:0000255" key="1">
    <source>
        <dbReference type="HAMAP-Rule" id="MF_02082"/>
    </source>
</evidence>
<proteinExistence type="inferred from homology"/>
<dbReference type="EC" id="2.7.2.17" evidence="1"/>
<dbReference type="EC" id="2.7.2.19" evidence="1"/>
<dbReference type="EMBL" id="BA000001">
    <property type="protein sequence ID" value="BAA30832.1"/>
    <property type="molecule type" value="Genomic_DNA"/>
</dbReference>
<dbReference type="PIR" id="A71180">
    <property type="entry name" value="A71180"/>
</dbReference>
<dbReference type="SMR" id="O59398"/>
<dbReference type="STRING" id="70601.gene:9378714"/>
<dbReference type="EnsemblBacteria" id="BAA30832">
    <property type="protein sequence ID" value="BAA30832"/>
    <property type="gene ID" value="BAA30832"/>
</dbReference>
<dbReference type="KEGG" id="pho:PH1718"/>
<dbReference type="eggNOG" id="arCOG00862">
    <property type="taxonomic scope" value="Archaea"/>
</dbReference>
<dbReference type="UniPathway" id="UPA00033">
    <property type="reaction ID" value="UER00036"/>
</dbReference>
<dbReference type="UniPathway" id="UPA00068"/>
<dbReference type="Proteomes" id="UP000000752">
    <property type="component" value="Chromosome"/>
</dbReference>
<dbReference type="GO" id="GO:0005737">
    <property type="term" value="C:cytoplasm"/>
    <property type="evidence" value="ECO:0007669"/>
    <property type="project" value="UniProtKB-SubCell"/>
</dbReference>
<dbReference type="GO" id="GO:0003991">
    <property type="term" value="F:acetylglutamate kinase activity"/>
    <property type="evidence" value="ECO:0007669"/>
    <property type="project" value="TreeGrafter"/>
</dbReference>
<dbReference type="GO" id="GO:0005524">
    <property type="term" value="F:ATP binding"/>
    <property type="evidence" value="ECO:0007669"/>
    <property type="project" value="UniProtKB-KW"/>
</dbReference>
<dbReference type="GO" id="GO:0043744">
    <property type="term" value="F:N2-acetyl-L-aminoadipate kinase activity"/>
    <property type="evidence" value="ECO:0007669"/>
    <property type="project" value="RHEA"/>
</dbReference>
<dbReference type="GO" id="GO:0042450">
    <property type="term" value="P:arginine biosynthetic process via ornithine"/>
    <property type="evidence" value="ECO:0007669"/>
    <property type="project" value="UniProtKB-UniRule"/>
</dbReference>
<dbReference type="GO" id="GO:0006526">
    <property type="term" value="P:L-arginine biosynthetic process"/>
    <property type="evidence" value="ECO:0007669"/>
    <property type="project" value="UniProtKB-UniPathway"/>
</dbReference>
<dbReference type="GO" id="GO:0019878">
    <property type="term" value="P:lysine biosynthetic process via aminoadipic acid"/>
    <property type="evidence" value="ECO:0007669"/>
    <property type="project" value="UniProtKB-UniRule"/>
</dbReference>
<dbReference type="Gene3D" id="3.40.1160.10">
    <property type="entry name" value="Acetylglutamate kinase-like"/>
    <property type="match status" value="1"/>
</dbReference>
<dbReference type="HAMAP" id="MF_02082">
    <property type="entry name" value="LysZ"/>
    <property type="match status" value="1"/>
</dbReference>
<dbReference type="InterPro" id="IPR036393">
    <property type="entry name" value="AceGlu_kinase-like_sf"/>
</dbReference>
<dbReference type="InterPro" id="IPR004662">
    <property type="entry name" value="AcgluKinase_fam"/>
</dbReference>
<dbReference type="InterPro" id="IPR001048">
    <property type="entry name" value="Asp/Glu/Uridylate_kinase"/>
</dbReference>
<dbReference type="InterPro" id="IPR037529">
    <property type="entry name" value="LysZ"/>
</dbReference>
<dbReference type="NCBIfam" id="TIGR00761">
    <property type="entry name" value="argB"/>
    <property type="match status" value="1"/>
</dbReference>
<dbReference type="NCBIfam" id="NF010660">
    <property type="entry name" value="PRK14058.1-2"/>
    <property type="match status" value="1"/>
</dbReference>
<dbReference type="PANTHER" id="PTHR23342">
    <property type="entry name" value="N-ACETYLGLUTAMATE SYNTHASE"/>
    <property type="match status" value="1"/>
</dbReference>
<dbReference type="PANTHER" id="PTHR23342:SF0">
    <property type="entry name" value="N-ACETYLGLUTAMATE SYNTHASE, MITOCHONDRIAL"/>
    <property type="match status" value="1"/>
</dbReference>
<dbReference type="Pfam" id="PF00696">
    <property type="entry name" value="AA_kinase"/>
    <property type="match status" value="1"/>
</dbReference>
<dbReference type="PIRSF" id="PIRSF000728">
    <property type="entry name" value="NAGK"/>
    <property type="match status" value="1"/>
</dbReference>
<dbReference type="SUPFAM" id="SSF53633">
    <property type="entry name" value="Carbamate kinase-like"/>
    <property type="match status" value="1"/>
</dbReference>